<organism>
    <name type="scientific">Pongo abelii</name>
    <name type="common">Sumatran orangutan</name>
    <name type="synonym">Pongo pygmaeus abelii</name>
    <dbReference type="NCBI Taxonomy" id="9601"/>
    <lineage>
        <taxon>Eukaryota</taxon>
        <taxon>Metazoa</taxon>
        <taxon>Chordata</taxon>
        <taxon>Craniata</taxon>
        <taxon>Vertebrata</taxon>
        <taxon>Euteleostomi</taxon>
        <taxon>Mammalia</taxon>
        <taxon>Eutheria</taxon>
        <taxon>Euarchontoglires</taxon>
        <taxon>Primates</taxon>
        <taxon>Haplorrhini</taxon>
        <taxon>Catarrhini</taxon>
        <taxon>Hominidae</taxon>
        <taxon>Pongo</taxon>
    </lineage>
</organism>
<dbReference type="EMBL" id="CR857724">
    <property type="protein sequence ID" value="CAH89992.1"/>
    <property type="status" value="ALT_INIT"/>
    <property type="molecule type" value="mRNA"/>
</dbReference>
<dbReference type="SMR" id="Q5RE15"/>
<dbReference type="STRING" id="9601.ENSPPYP00000011119"/>
<dbReference type="eggNOG" id="KOG3151">
    <property type="taxonomic scope" value="Eukaryota"/>
</dbReference>
<dbReference type="InParanoid" id="Q5RE15"/>
<dbReference type="Proteomes" id="UP000001595">
    <property type="component" value="Unplaced"/>
</dbReference>
<dbReference type="GO" id="GO:0005829">
    <property type="term" value="C:cytosol"/>
    <property type="evidence" value="ECO:0007669"/>
    <property type="project" value="TreeGrafter"/>
</dbReference>
<dbReference type="GO" id="GO:0005634">
    <property type="term" value="C:nucleus"/>
    <property type="evidence" value="ECO:0007669"/>
    <property type="project" value="TreeGrafter"/>
</dbReference>
<dbReference type="GO" id="GO:0022624">
    <property type="term" value="C:proteasome accessory complex"/>
    <property type="evidence" value="ECO:0000250"/>
    <property type="project" value="UniProtKB"/>
</dbReference>
<dbReference type="GO" id="GO:0008541">
    <property type="term" value="C:proteasome regulatory particle, lid subcomplex"/>
    <property type="evidence" value="ECO:0007669"/>
    <property type="project" value="TreeGrafter"/>
</dbReference>
<dbReference type="GO" id="GO:0043161">
    <property type="term" value="P:proteasome-mediated ubiquitin-dependent protein catabolic process"/>
    <property type="evidence" value="ECO:0007669"/>
    <property type="project" value="TreeGrafter"/>
</dbReference>
<dbReference type="FunFam" id="1.25.40.990:FF:000001">
    <property type="entry name" value="26S proteasome non-ATPase regulatory subunit"/>
    <property type="match status" value="1"/>
</dbReference>
<dbReference type="Gene3D" id="1.25.40.990">
    <property type="match status" value="1"/>
</dbReference>
<dbReference type="InterPro" id="IPR006746">
    <property type="entry name" value="26S_Psome_Rpn12"/>
</dbReference>
<dbReference type="InterPro" id="IPR033464">
    <property type="entry name" value="CSN8_PSD8_EIF3K"/>
</dbReference>
<dbReference type="InterPro" id="IPR000717">
    <property type="entry name" value="PCI_dom"/>
</dbReference>
<dbReference type="PANTHER" id="PTHR12387">
    <property type="entry name" value="26S PROTEASOME NON-ATPASE REGULATORY SUBUNIT 8"/>
    <property type="match status" value="1"/>
</dbReference>
<dbReference type="PANTHER" id="PTHR12387:SF0">
    <property type="entry name" value="26S PROTEASOME NON-ATPASE REGULATORY SUBUNIT 8"/>
    <property type="match status" value="1"/>
</dbReference>
<dbReference type="Pfam" id="PF10075">
    <property type="entry name" value="CSN8_PSD8_EIF3K"/>
    <property type="match status" value="1"/>
</dbReference>
<dbReference type="PROSITE" id="PS50250">
    <property type="entry name" value="PCI"/>
    <property type="match status" value="1"/>
</dbReference>
<comment type="function">
    <text evidence="1">Component of the 26S proteasome, a multiprotein complex involved in the ATP-dependent degradation of ubiquitinated proteins. This complex plays a key role in the maintenance of protein homeostasis by removing misfolded or damaged proteins, which could impair cellular functions, and by removing proteins whose functions are no longer required. Therefore, the proteasome participates in numerous cellular processes, including cell cycle progression, apoptosis, or DNA damage repair.</text>
</comment>
<comment type="subunit">
    <text evidence="1 2">Component of the 19S proteasome regulatory particle complex. The 26S proteasome consists of a 20S core particle (CP) and two 19S regulatory subunits (RP). The regulatory particle is made of a lid composed of 9 subunits including PSMD8, a base containing 6 ATPases and few additional components. Interacts with DDI2 (By similarity). Interacts with TASOR (By similarity).</text>
</comment>
<comment type="similarity">
    <text evidence="4">Belongs to the proteasome subunit S14 family.</text>
</comment>
<comment type="sequence caution" evidence="4">
    <conflict type="erroneous initiation">
        <sequence resource="EMBL-CDS" id="CAH89992"/>
    </conflict>
    <text>Truncated N-terminus.</text>
</comment>
<protein>
    <recommendedName>
        <fullName>26S proteasome non-ATPase regulatory subunit 8</fullName>
    </recommendedName>
    <alternativeName>
        <fullName>26S proteasome regulatory subunit RPN12</fullName>
    </alternativeName>
</protein>
<evidence type="ECO:0000250" key="1">
    <source>
        <dbReference type="UniProtKB" id="P48556"/>
    </source>
</evidence>
<evidence type="ECO:0000250" key="2">
    <source>
        <dbReference type="UniProtKB" id="Q9CX56"/>
    </source>
</evidence>
<evidence type="ECO:0000255" key="3">
    <source>
        <dbReference type="PROSITE-ProRule" id="PRU01185"/>
    </source>
</evidence>
<evidence type="ECO:0000305" key="4"/>
<keyword id="KW-1017">Isopeptide bond</keyword>
<keyword id="KW-0597">Phosphoprotein</keyword>
<keyword id="KW-0647">Proteasome</keyword>
<keyword id="KW-1185">Reference proteome</keyword>
<keyword id="KW-0832">Ubl conjugation</keyword>
<name>PSMD8_PONAB</name>
<gene>
    <name type="primary">PSMD8</name>
</gene>
<feature type="chain" id="PRO_0000233270" description="26S proteasome non-ATPase regulatory subunit 8">
    <location>
        <begin position="1"/>
        <end position="289"/>
    </location>
</feature>
<feature type="domain" description="PCI" evidence="3">
    <location>
        <begin position="101"/>
        <end position="270"/>
    </location>
</feature>
<feature type="modified residue" description="Phosphoserine" evidence="1">
    <location>
        <position position="45"/>
    </location>
</feature>
<feature type="cross-link" description="Glycyl lysine isopeptide (Lys-Gly) (interchain with G-Cter in SUMO2)" evidence="1">
    <location>
        <position position="236"/>
    </location>
</feature>
<feature type="non-terminal residue">
    <location>
        <position position="1"/>
    </location>
</feature>
<proteinExistence type="evidence at transcript level"/>
<reference key="1">
    <citation type="submission" date="2004-11" db="EMBL/GenBank/DDBJ databases">
        <authorList>
            <consortium name="The German cDNA consortium"/>
        </authorList>
    </citation>
    <scope>NUCLEOTIDE SEQUENCE [LARGE SCALE MRNA]</scope>
    <source>
        <tissue>Kidney</tissue>
    </source>
</reference>
<sequence length="289" mass="32806">RKMAAAAVNGAAGFSSSGPAATSGAVLQAATGMYEQLKGEWNRKSPNLSKCGEELGRLKLVLLELNFLPTTGTKLTKQQLILARDILEIGAQWSILRKDIPSFERYMAQLKCYYFDYKEQLPESAYMHQLLGLNLLFLLSQNRVAEFHTELERLPAKDIQTNVYIKHPVSLEQYLMEGSYNKVFLAKGNIPAESYAFFIDILLDTIRDEIAGCIEKAYEKILFTEATRILFFNTPKKMTDYAKKRGWVLGPNNYYSFASQQQKPEDTTIPSTELAKQVIEYARQLEMIV</sequence>
<accession>Q5RE15</accession>